<evidence type="ECO:0000255" key="1">
    <source>
        <dbReference type="PROSITE-ProRule" id="PRU00303"/>
    </source>
</evidence>
<evidence type="ECO:0000305" key="2"/>
<accession>Q6GC46</accession>
<sequence length="263" mass="30617">MEYLKRLALFISVIILTIFIMGCDSQSDTAENPKEGSKEAQIKKSFSKTLDMYPIKNLEDLYDKEGYRDGEFKKGDKGTWTISTDFAKSNKPGEMDSEGMVLHLNRNMRTATGHYTIRTTYDELGKMTREKNYRVELKNNKIVVLDKVEDVNLKHKIENFKFFSQYADFKDLKNYKNGRISINENVPYYEAEYKRNNSDGNVKKLREKYPITTKQSPILKLHIDGDIKGSSVGYKQIEYMFSKEKEDETFMSDFLNFGPSHSN</sequence>
<organism>
    <name type="scientific">Staphylococcus aureus (strain MSSA476)</name>
    <dbReference type="NCBI Taxonomy" id="282459"/>
    <lineage>
        <taxon>Bacteria</taxon>
        <taxon>Bacillati</taxon>
        <taxon>Bacillota</taxon>
        <taxon>Bacilli</taxon>
        <taxon>Bacillales</taxon>
        <taxon>Staphylococcaceae</taxon>
        <taxon>Staphylococcus</taxon>
    </lineage>
</organism>
<protein>
    <recommendedName>
        <fullName>Uncharacterized lipoprotein SAS0401</fullName>
    </recommendedName>
</protein>
<dbReference type="EMBL" id="BX571857">
    <property type="protein sequence ID" value="CAG42174.1"/>
    <property type="molecule type" value="Genomic_DNA"/>
</dbReference>
<dbReference type="RefSeq" id="WP_000456136.1">
    <property type="nucleotide sequence ID" value="NC_002953.3"/>
</dbReference>
<dbReference type="SMR" id="Q6GC46"/>
<dbReference type="KEGG" id="sas:SAS0401"/>
<dbReference type="HOGENOM" id="CLU_071589_0_1_9"/>
<dbReference type="GO" id="GO:0005886">
    <property type="term" value="C:plasma membrane"/>
    <property type="evidence" value="ECO:0007669"/>
    <property type="project" value="UniProtKB-SubCell"/>
</dbReference>
<dbReference type="Gene3D" id="2.50.20.40">
    <property type="match status" value="1"/>
</dbReference>
<dbReference type="InterPro" id="IPR007595">
    <property type="entry name" value="Csa"/>
</dbReference>
<dbReference type="InterPro" id="IPR038641">
    <property type="entry name" value="Csa_sf"/>
</dbReference>
<dbReference type="NCBIfam" id="TIGR01742">
    <property type="entry name" value="SA_tandem_lipo"/>
    <property type="match status" value="1"/>
</dbReference>
<dbReference type="Pfam" id="PF04507">
    <property type="entry name" value="DUF576"/>
    <property type="match status" value="1"/>
</dbReference>
<dbReference type="PROSITE" id="PS51257">
    <property type="entry name" value="PROKAR_LIPOPROTEIN"/>
    <property type="match status" value="1"/>
</dbReference>
<proteinExistence type="inferred from homology"/>
<feature type="signal peptide" evidence="1">
    <location>
        <begin position="1"/>
        <end position="22"/>
    </location>
</feature>
<feature type="chain" id="PRO_0000282168" description="Uncharacterized lipoprotein SAS0401">
    <location>
        <begin position="23"/>
        <end position="263"/>
    </location>
</feature>
<feature type="lipid moiety-binding region" description="N-palmitoyl cysteine" evidence="1">
    <location>
        <position position="23"/>
    </location>
</feature>
<feature type="lipid moiety-binding region" description="S-diacylglycerol cysteine" evidence="1">
    <location>
        <position position="23"/>
    </location>
</feature>
<name>Y401_STAAS</name>
<comment type="subcellular location">
    <subcellularLocation>
        <location evidence="1">Cell membrane</location>
        <topology evidence="1">Lipid-anchor</topology>
    </subcellularLocation>
</comment>
<comment type="similarity">
    <text evidence="2">Belongs to the staphylococcal tandem lipoprotein family.</text>
</comment>
<keyword id="KW-1003">Cell membrane</keyword>
<keyword id="KW-0449">Lipoprotein</keyword>
<keyword id="KW-0472">Membrane</keyword>
<keyword id="KW-0564">Palmitate</keyword>
<keyword id="KW-0732">Signal</keyword>
<gene>
    <name type="ordered locus">SAS0401</name>
</gene>
<reference key="1">
    <citation type="journal article" date="2004" name="Proc. Natl. Acad. Sci. U.S.A.">
        <title>Complete genomes of two clinical Staphylococcus aureus strains: evidence for the rapid evolution of virulence and drug resistance.</title>
        <authorList>
            <person name="Holden M.T.G."/>
            <person name="Feil E.J."/>
            <person name="Lindsay J.A."/>
            <person name="Peacock S.J."/>
            <person name="Day N.P.J."/>
            <person name="Enright M.C."/>
            <person name="Foster T.J."/>
            <person name="Moore C.E."/>
            <person name="Hurst L."/>
            <person name="Atkin R."/>
            <person name="Barron A."/>
            <person name="Bason N."/>
            <person name="Bentley S.D."/>
            <person name="Chillingworth C."/>
            <person name="Chillingworth T."/>
            <person name="Churcher C."/>
            <person name="Clark L."/>
            <person name="Corton C."/>
            <person name="Cronin A."/>
            <person name="Doggett J."/>
            <person name="Dowd L."/>
            <person name="Feltwell T."/>
            <person name="Hance Z."/>
            <person name="Harris B."/>
            <person name="Hauser H."/>
            <person name="Holroyd S."/>
            <person name="Jagels K."/>
            <person name="James K.D."/>
            <person name="Lennard N."/>
            <person name="Line A."/>
            <person name="Mayes R."/>
            <person name="Moule S."/>
            <person name="Mungall K."/>
            <person name="Ormond D."/>
            <person name="Quail M.A."/>
            <person name="Rabbinowitsch E."/>
            <person name="Rutherford K.M."/>
            <person name="Sanders M."/>
            <person name="Sharp S."/>
            <person name="Simmonds M."/>
            <person name="Stevens K."/>
            <person name="Whitehead S."/>
            <person name="Barrell B.G."/>
            <person name="Spratt B.G."/>
            <person name="Parkhill J."/>
        </authorList>
    </citation>
    <scope>NUCLEOTIDE SEQUENCE [LARGE SCALE GENOMIC DNA]</scope>
    <source>
        <strain>MSSA476</strain>
    </source>
</reference>